<gene>
    <name evidence="1" type="primary">nuoC</name>
    <name type="ordered locus">XC_1591</name>
</gene>
<protein>
    <recommendedName>
        <fullName evidence="1">NADH-quinone oxidoreductase subunit C</fullName>
        <ecNumber evidence="1">7.1.1.-</ecNumber>
    </recommendedName>
    <alternativeName>
        <fullName evidence="1">NADH dehydrogenase I subunit C</fullName>
    </alternativeName>
    <alternativeName>
        <fullName evidence="1">NDH-1 subunit C</fullName>
    </alternativeName>
</protein>
<feature type="chain" id="PRO_0000358225" description="NADH-quinone oxidoreductase subunit C">
    <location>
        <begin position="1"/>
        <end position="250"/>
    </location>
</feature>
<proteinExistence type="inferred from homology"/>
<evidence type="ECO:0000255" key="1">
    <source>
        <dbReference type="HAMAP-Rule" id="MF_01357"/>
    </source>
</evidence>
<keyword id="KW-0997">Cell inner membrane</keyword>
<keyword id="KW-1003">Cell membrane</keyword>
<keyword id="KW-0472">Membrane</keyword>
<keyword id="KW-0520">NAD</keyword>
<keyword id="KW-0874">Quinone</keyword>
<keyword id="KW-1278">Translocase</keyword>
<keyword id="KW-0813">Transport</keyword>
<keyword id="KW-0830">Ubiquinone</keyword>
<sequence length="250" mass="27905">MAEQASSFTDRLAARFAGAQISVVQPRGEVTLEVAAAQWHATCLALRDELGFEQLSDLCGVDYLGYGSDEWDTADVSSQGFSRGVEGKALGRFAWGEFPSQESSNGAQPQQLPTQRFAVVAQLISYQHNQRLRVRCYAPDEQVPVVASLTDIWPGVNWFEREAFDLFGIVFDGHPDLRRILTDYGFVGHPFRKDFPLIGNVEVRYDDERKRVVYEPVTSVEPRVGVPRVIRDDARYETAAGEVGKSETAK</sequence>
<name>NUOC_XANC8</name>
<accession>Q4UWB6</accession>
<reference key="1">
    <citation type="journal article" date="2005" name="Genome Res.">
        <title>Comparative and functional genomic analyses of the pathogenicity of phytopathogen Xanthomonas campestris pv. campestris.</title>
        <authorList>
            <person name="Qian W."/>
            <person name="Jia Y."/>
            <person name="Ren S.-X."/>
            <person name="He Y.-Q."/>
            <person name="Feng J.-X."/>
            <person name="Lu L.-F."/>
            <person name="Sun Q."/>
            <person name="Ying G."/>
            <person name="Tang D.-J."/>
            <person name="Tang H."/>
            <person name="Wu W."/>
            <person name="Hao P."/>
            <person name="Wang L."/>
            <person name="Jiang B.-L."/>
            <person name="Zeng S."/>
            <person name="Gu W.-Y."/>
            <person name="Lu G."/>
            <person name="Rong L."/>
            <person name="Tian Y."/>
            <person name="Yao Z."/>
            <person name="Fu G."/>
            <person name="Chen B."/>
            <person name="Fang R."/>
            <person name="Qiang B."/>
            <person name="Chen Z."/>
            <person name="Zhao G.-P."/>
            <person name="Tang J.-L."/>
            <person name="He C."/>
        </authorList>
    </citation>
    <scope>NUCLEOTIDE SEQUENCE [LARGE SCALE GENOMIC DNA]</scope>
    <source>
        <strain>8004</strain>
    </source>
</reference>
<organism>
    <name type="scientific">Xanthomonas campestris pv. campestris (strain 8004)</name>
    <dbReference type="NCBI Taxonomy" id="314565"/>
    <lineage>
        <taxon>Bacteria</taxon>
        <taxon>Pseudomonadati</taxon>
        <taxon>Pseudomonadota</taxon>
        <taxon>Gammaproteobacteria</taxon>
        <taxon>Lysobacterales</taxon>
        <taxon>Lysobacteraceae</taxon>
        <taxon>Xanthomonas</taxon>
    </lineage>
</organism>
<comment type="function">
    <text evidence="1">NDH-1 shuttles electrons from NADH, via FMN and iron-sulfur (Fe-S) centers, to quinones in the respiratory chain. The immediate electron acceptor for the enzyme in this species is believed to be ubiquinone. Couples the redox reaction to proton translocation (for every two electrons transferred, four hydrogen ions are translocated across the cytoplasmic membrane), and thus conserves the redox energy in a proton gradient.</text>
</comment>
<comment type="catalytic activity">
    <reaction evidence="1">
        <text>a quinone + NADH + 5 H(+)(in) = a quinol + NAD(+) + 4 H(+)(out)</text>
        <dbReference type="Rhea" id="RHEA:57888"/>
        <dbReference type="ChEBI" id="CHEBI:15378"/>
        <dbReference type="ChEBI" id="CHEBI:24646"/>
        <dbReference type="ChEBI" id="CHEBI:57540"/>
        <dbReference type="ChEBI" id="CHEBI:57945"/>
        <dbReference type="ChEBI" id="CHEBI:132124"/>
    </reaction>
</comment>
<comment type="subunit">
    <text evidence="1">NDH-1 is composed of 14 different subunits. Subunits NuoB, C, D, E, F, and G constitute the peripheral sector of the complex.</text>
</comment>
<comment type="subcellular location">
    <subcellularLocation>
        <location evidence="1">Cell inner membrane</location>
        <topology evidence="1">Peripheral membrane protein</topology>
        <orientation evidence="1">Cytoplasmic side</orientation>
    </subcellularLocation>
</comment>
<comment type="similarity">
    <text evidence="1">Belongs to the complex I 30 kDa subunit family.</text>
</comment>
<dbReference type="EC" id="7.1.1.-" evidence="1"/>
<dbReference type="EMBL" id="CP000050">
    <property type="protein sequence ID" value="AAY48657.1"/>
    <property type="molecule type" value="Genomic_DNA"/>
</dbReference>
<dbReference type="RefSeq" id="WP_011037657.1">
    <property type="nucleotide sequence ID" value="NZ_CP155948.1"/>
</dbReference>
<dbReference type="SMR" id="Q4UWB6"/>
<dbReference type="KEGG" id="xcb:XC_1591"/>
<dbReference type="HOGENOM" id="CLU_042628_2_1_6"/>
<dbReference type="Proteomes" id="UP000000420">
    <property type="component" value="Chromosome"/>
</dbReference>
<dbReference type="GO" id="GO:0005886">
    <property type="term" value="C:plasma membrane"/>
    <property type="evidence" value="ECO:0007669"/>
    <property type="project" value="UniProtKB-SubCell"/>
</dbReference>
<dbReference type="GO" id="GO:0008137">
    <property type="term" value="F:NADH dehydrogenase (ubiquinone) activity"/>
    <property type="evidence" value="ECO:0007669"/>
    <property type="project" value="InterPro"/>
</dbReference>
<dbReference type="GO" id="GO:0050136">
    <property type="term" value="F:NADH:ubiquinone reductase (non-electrogenic) activity"/>
    <property type="evidence" value="ECO:0007669"/>
    <property type="project" value="UniProtKB-UniRule"/>
</dbReference>
<dbReference type="GO" id="GO:0048038">
    <property type="term" value="F:quinone binding"/>
    <property type="evidence" value="ECO:0007669"/>
    <property type="project" value="UniProtKB-KW"/>
</dbReference>
<dbReference type="Gene3D" id="3.30.460.80">
    <property type="entry name" value="NADH:ubiquinone oxidoreductase, 30kDa subunit"/>
    <property type="match status" value="1"/>
</dbReference>
<dbReference type="HAMAP" id="MF_01357">
    <property type="entry name" value="NDH1_NuoC"/>
    <property type="match status" value="1"/>
</dbReference>
<dbReference type="InterPro" id="IPR010218">
    <property type="entry name" value="NADH_DH_suC"/>
</dbReference>
<dbReference type="InterPro" id="IPR037232">
    <property type="entry name" value="NADH_quin_OxRdtase_su_C/D-like"/>
</dbReference>
<dbReference type="InterPro" id="IPR001268">
    <property type="entry name" value="NADH_UbQ_OxRdtase_30kDa_su"/>
</dbReference>
<dbReference type="InterPro" id="IPR020396">
    <property type="entry name" value="NADH_UbQ_OxRdtase_CS"/>
</dbReference>
<dbReference type="NCBIfam" id="NF004730">
    <property type="entry name" value="PRK06074.1-1"/>
    <property type="match status" value="1"/>
</dbReference>
<dbReference type="NCBIfam" id="NF004732">
    <property type="entry name" value="PRK06074.1-4"/>
    <property type="match status" value="1"/>
</dbReference>
<dbReference type="PANTHER" id="PTHR10884:SF14">
    <property type="entry name" value="NADH DEHYDROGENASE [UBIQUINONE] IRON-SULFUR PROTEIN 3, MITOCHONDRIAL"/>
    <property type="match status" value="1"/>
</dbReference>
<dbReference type="PANTHER" id="PTHR10884">
    <property type="entry name" value="NADH DEHYDROGENASE UBIQUINONE IRON-SULFUR PROTEIN 3"/>
    <property type="match status" value="1"/>
</dbReference>
<dbReference type="Pfam" id="PF00329">
    <property type="entry name" value="Complex1_30kDa"/>
    <property type="match status" value="1"/>
</dbReference>
<dbReference type="SUPFAM" id="SSF143243">
    <property type="entry name" value="Nqo5-like"/>
    <property type="match status" value="1"/>
</dbReference>
<dbReference type="PROSITE" id="PS00542">
    <property type="entry name" value="COMPLEX1_30K"/>
    <property type="match status" value="1"/>
</dbReference>